<reference key="1">
    <citation type="journal article" date="1993" name="J. Gen. Microbiol.">
        <title>The Sc7/Sc14 gene family of Schizophyllum commune codes for extracellular proteins specifically expressed during fruit-body formation.</title>
        <authorList>
            <person name="Schuren F.H.J."/>
            <person name="Asgeirsdottir S.A."/>
            <person name="Kothe E.M."/>
            <person name="Scheer J.M.J."/>
            <person name="Wessels J.G.H."/>
        </authorList>
    </citation>
    <scope>NUCLEOTIDE SEQUENCE [MRNA]</scope>
</reference>
<protein>
    <recommendedName>
        <fullName>Fruiting body protein SC7</fullName>
    </recommendedName>
</protein>
<keyword id="KW-0293">Fruiting body</keyword>
<keyword id="KW-0325">Glycoprotein</keyword>
<keyword id="KW-0964">Secreted</keyword>
<keyword id="KW-0732">Signal</keyword>
<feature type="signal peptide" evidence="1">
    <location>
        <begin position="1"/>
        <end position="16"/>
    </location>
</feature>
<feature type="chain" id="PRO_0000006315" description="Fruiting body protein SC7">
    <location>
        <begin position="17"/>
        <end position="204"/>
    </location>
</feature>
<feature type="domain" description="SCP">
    <location>
        <begin position="62"/>
        <end position="185"/>
    </location>
</feature>
<feature type="glycosylation site" description="N-linked (GlcNAc...) asparagine" evidence="1">
    <location>
        <position position="80"/>
    </location>
</feature>
<feature type="glycosylation site" description="N-linked (GlcNAc...) asparagine" evidence="1">
    <location>
        <position position="118"/>
    </location>
</feature>
<feature type="glycosylation site" description="N-linked (GlcNAc...) asparagine" evidence="1">
    <location>
        <position position="134"/>
    </location>
</feature>
<sequence>MKLTVILLTAVLAASASPAPVDVDARAPVALDSRSPIDIDSRSADALANRAAPPQSEIDQWLKAHNNERAQHGAVALVWNQTLSDKAADWASQCIWEHSNSGQNLAAWFSPQANKPMNISQGVGGWNAEEPDYNTTTYSGAGHWTQVVWKSTTSVGCAAYSCPPGTLGRKPTDPWKTLWYYVCNYYRPGNVSPRDKYYPINVQP</sequence>
<proteinExistence type="evidence at transcript level"/>
<accession>P35794</accession>
<evidence type="ECO:0000255" key="1"/>
<evidence type="ECO:0000305" key="2"/>
<name>SC7_SCHCO</name>
<comment type="subcellular location">
    <subcellularLocation>
        <location>Secreted</location>
    </subcellularLocation>
</comment>
<comment type="developmental stage">
    <text>Expressed only in fruiting dikaryons.</text>
</comment>
<comment type="similarity">
    <text evidence="2">Belongs to the CRISP family.</text>
</comment>
<dbReference type="EMBL" id="M81722">
    <property type="protein sequence ID" value="AAA16207.1"/>
    <property type="molecule type" value="mRNA"/>
</dbReference>
<dbReference type="PIR" id="S27448">
    <property type="entry name" value="S27448"/>
</dbReference>
<dbReference type="SMR" id="P35794"/>
<dbReference type="GlyCosmos" id="P35794">
    <property type="glycosylation" value="3 sites, No reported glycans"/>
</dbReference>
<dbReference type="VEuPathDB" id="FungiDB:SCHCODRAFT_02627923"/>
<dbReference type="OMA" id="CAWNKVC"/>
<dbReference type="GO" id="GO:0005576">
    <property type="term" value="C:extracellular region"/>
    <property type="evidence" value="ECO:0007669"/>
    <property type="project" value="UniProtKB-SubCell"/>
</dbReference>
<dbReference type="CDD" id="cd05380">
    <property type="entry name" value="CAP_euk"/>
    <property type="match status" value="1"/>
</dbReference>
<dbReference type="Gene3D" id="3.40.33.10">
    <property type="entry name" value="CAP"/>
    <property type="match status" value="1"/>
</dbReference>
<dbReference type="InterPro" id="IPR018244">
    <property type="entry name" value="Allrgn_V5/Tpx1_CS"/>
</dbReference>
<dbReference type="InterPro" id="IPR014044">
    <property type="entry name" value="CAP_dom"/>
</dbReference>
<dbReference type="InterPro" id="IPR035940">
    <property type="entry name" value="CAP_sf"/>
</dbReference>
<dbReference type="InterPro" id="IPR001283">
    <property type="entry name" value="CRISP-related"/>
</dbReference>
<dbReference type="PANTHER" id="PTHR10334">
    <property type="entry name" value="CYSTEINE-RICH SECRETORY PROTEIN-RELATED"/>
    <property type="match status" value="1"/>
</dbReference>
<dbReference type="Pfam" id="PF00188">
    <property type="entry name" value="CAP"/>
    <property type="match status" value="1"/>
</dbReference>
<dbReference type="PRINTS" id="PR00837">
    <property type="entry name" value="V5TPXLIKE"/>
</dbReference>
<dbReference type="SMART" id="SM00198">
    <property type="entry name" value="SCP"/>
    <property type="match status" value="1"/>
</dbReference>
<dbReference type="SUPFAM" id="SSF55797">
    <property type="entry name" value="PR-1-like"/>
    <property type="match status" value="1"/>
</dbReference>
<dbReference type="PROSITE" id="PS01009">
    <property type="entry name" value="CRISP_1"/>
    <property type="match status" value="1"/>
</dbReference>
<dbReference type="PROSITE" id="PS01010">
    <property type="entry name" value="CRISP_2"/>
    <property type="match status" value="1"/>
</dbReference>
<gene>
    <name type="primary">SC7</name>
</gene>
<organism>
    <name type="scientific">Schizophyllum commune</name>
    <name type="common">Split gill fungus</name>
    <dbReference type="NCBI Taxonomy" id="5334"/>
    <lineage>
        <taxon>Eukaryota</taxon>
        <taxon>Fungi</taxon>
        <taxon>Dikarya</taxon>
        <taxon>Basidiomycota</taxon>
        <taxon>Agaricomycotina</taxon>
        <taxon>Agaricomycetes</taxon>
        <taxon>Agaricomycetidae</taxon>
        <taxon>Agaricales</taxon>
        <taxon>Schizophyllaceae</taxon>
        <taxon>Schizophyllum</taxon>
    </lineage>
</organism>